<feature type="chain" id="PRO_0000388032" description="Structure-specific endonuclease subunit SLX4">
    <location>
        <begin position="1"/>
        <end position="846"/>
    </location>
</feature>
<feature type="region of interest" description="Disordered" evidence="2">
    <location>
        <begin position="1"/>
        <end position="20"/>
    </location>
</feature>
<feature type="region of interest" description="Disordered" evidence="2">
    <location>
        <begin position="84"/>
        <end position="111"/>
    </location>
</feature>
<feature type="region of interest" description="Disordered" evidence="2">
    <location>
        <begin position="123"/>
        <end position="164"/>
    </location>
</feature>
<feature type="region of interest" description="Disordered" evidence="2">
    <location>
        <begin position="283"/>
        <end position="322"/>
    </location>
</feature>
<feature type="region of interest" description="Disordered" evidence="2">
    <location>
        <begin position="480"/>
        <end position="513"/>
    </location>
</feature>
<feature type="region of interest" description="Disordered" evidence="2">
    <location>
        <begin position="624"/>
        <end position="690"/>
    </location>
</feature>
<feature type="region of interest" description="Disordered" evidence="2">
    <location>
        <begin position="723"/>
        <end position="751"/>
    </location>
</feature>
<feature type="compositionally biased region" description="Basic and acidic residues" evidence="2">
    <location>
        <begin position="141"/>
        <end position="153"/>
    </location>
</feature>
<feature type="compositionally biased region" description="Polar residues" evidence="2">
    <location>
        <begin position="293"/>
        <end position="303"/>
    </location>
</feature>
<feature type="compositionally biased region" description="Basic residues" evidence="2">
    <location>
        <begin position="306"/>
        <end position="318"/>
    </location>
</feature>
<feature type="compositionally biased region" description="Polar residues" evidence="2">
    <location>
        <begin position="657"/>
        <end position="680"/>
    </location>
</feature>
<feature type="compositionally biased region" description="Polar residues" evidence="2">
    <location>
        <begin position="725"/>
        <end position="751"/>
    </location>
</feature>
<accession>C5FSF3</accession>
<comment type="function">
    <text evidence="1">Regulatory subunit of the SLX1-SLX4 structure-specific endonuclease that resolves DNA secondary structures generated during DNA repair and recombination. Has endonuclease activity towards branched DNA substrates, introducing single-strand cuts in duplex DNA close to junctions with ss-DNA.</text>
</comment>
<comment type="subunit">
    <text evidence="1">Forms a heterodimer with SLX1.</text>
</comment>
<comment type="subcellular location">
    <subcellularLocation>
        <location evidence="1">Nucleus</location>
    </subcellularLocation>
</comment>
<comment type="PTM">
    <text evidence="1">Phosphorylated in response to DNA damage.</text>
</comment>
<comment type="similarity">
    <text evidence="1">Belongs to the SLX4 family.</text>
</comment>
<organism>
    <name type="scientific">Arthroderma otae (strain ATCC MYA-4605 / CBS 113480)</name>
    <name type="common">Microsporum canis</name>
    <dbReference type="NCBI Taxonomy" id="554155"/>
    <lineage>
        <taxon>Eukaryota</taxon>
        <taxon>Fungi</taxon>
        <taxon>Dikarya</taxon>
        <taxon>Ascomycota</taxon>
        <taxon>Pezizomycotina</taxon>
        <taxon>Eurotiomycetes</taxon>
        <taxon>Eurotiomycetidae</taxon>
        <taxon>Onygenales</taxon>
        <taxon>Arthrodermataceae</taxon>
        <taxon>Microsporum</taxon>
    </lineage>
</organism>
<evidence type="ECO:0000255" key="1">
    <source>
        <dbReference type="HAMAP-Rule" id="MF_03110"/>
    </source>
</evidence>
<evidence type="ECO:0000256" key="2">
    <source>
        <dbReference type="SAM" id="MobiDB-lite"/>
    </source>
</evidence>
<gene>
    <name evidence="1" type="primary">SLX4</name>
    <name type="ORF">MCYG_05625</name>
</gene>
<proteinExistence type="inferred from homology"/>
<reference key="1">
    <citation type="journal article" date="2012" name="MBio">
        <title>Comparative genome analysis of Trichophyton rubrum and related dermatophytes reveals candidate genes involved in infection.</title>
        <authorList>
            <person name="Martinez D.A."/>
            <person name="Oliver B.G."/>
            <person name="Graeser Y."/>
            <person name="Goldberg J.M."/>
            <person name="Li W."/>
            <person name="Martinez-Rossi N.M."/>
            <person name="Monod M."/>
            <person name="Shelest E."/>
            <person name="Barton R.C."/>
            <person name="Birch E."/>
            <person name="Brakhage A.A."/>
            <person name="Chen Z."/>
            <person name="Gurr S.J."/>
            <person name="Heiman D."/>
            <person name="Heitman J."/>
            <person name="Kosti I."/>
            <person name="Rossi A."/>
            <person name="Saif S."/>
            <person name="Samalova M."/>
            <person name="Saunders C.W."/>
            <person name="Shea T."/>
            <person name="Summerbell R.C."/>
            <person name="Xu J."/>
            <person name="Young S."/>
            <person name="Zeng Q."/>
            <person name="Birren B.W."/>
            <person name="Cuomo C.A."/>
            <person name="White T.C."/>
        </authorList>
    </citation>
    <scope>NUCLEOTIDE SEQUENCE [LARGE SCALE GENOMIC DNA]</scope>
    <source>
        <strain>ATCC MYA-4605 / CBS 113480</strain>
    </source>
</reference>
<name>SLX4_ARTOC</name>
<protein>
    <recommendedName>
        <fullName evidence="1">Structure-specific endonuclease subunit SLX4</fullName>
    </recommendedName>
</protein>
<keyword id="KW-0227">DNA damage</keyword>
<keyword id="KW-0233">DNA recombination</keyword>
<keyword id="KW-0234">DNA repair</keyword>
<keyword id="KW-0539">Nucleus</keyword>
<keyword id="KW-0597">Phosphoprotein</keyword>
<keyword id="KW-1185">Reference proteome</keyword>
<sequence>MTDHGPDALDAFSPPRVGSASPVVISLVSPALTQMTVTPIDNSPKLPFNLAQGLESDLESHSDASNPLHPNVSHPMTRVALGEKAGAENLPVHRTKRRKLGNQRDNTAESMEDLVDCSRNHFQPAEDESTTQKQKTRKPAKPSEKGQKSEKTANLRLRGKVKKASDTQVLVPIDKSAQDPSQKFASQHRADEENGGLHLEEATSRRDYWTPIKDTNSASIDLTGSPVSIQADKAQAKSKDFRELMSEFNFSRETSHEVEAGCQLVNDKPTTKQLLEFMPQNCRTSKSLDSESLDTGTSSTSEGNGKRKQTKKAKRSAKSKITTITSLTTGRYESSLAPEGDHIPSSLVDNMVESIQPAEKAPSNRKNTKPKSKKAIPGRAECYALLKPAPTMEALKTIENQALLFGTSSQLERESSPNVYGLEPELGRDEVKSNSIQNISSEPSTGMGVSRFSKSKNLWGASSRDLDGYLLNVDMIDLVDPTPKITPKPGDERQSNLSNKNTERNIPEESSLLGEQVNAKDVELPDCLAGEISTSDTMQNSFEYLNTTNSQDGPVDDSMPNYDQLSTPELAKKLASFGFRPIKKRERIIELLEKCWESKRKSCIEPTTKPAILSTPQVVIQPIPPNANSKFMDSDSAIKPSSVPPKGTRKPKKITSKEITNPARSSWSTAKNLKSSSKPTDNMPDSMGSQSYVQPEIIEIEDSTDENLLESSKQPRDYRGAHTLASRSASSHITPQISSAPSQTVPIQTRASAGTNEKEIVDLPDIFLQITNAVKAQPRIRSVNGVKQPTWHEKIVMYDPIWLDDLTLWLNVEGFKLIKEDREVHPYLVREWCESKGICCCFRNKK</sequence>
<dbReference type="EMBL" id="DS995705">
    <property type="protein sequence ID" value="EEQ32806.1"/>
    <property type="molecule type" value="Genomic_DNA"/>
</dbReference>
<dbReference type="RefSeq" id="XP_002845756.1">
    <property type="nucleotide sequence ID" value="XM_002845710.1"/>
</dbReference>
<dbReference type="SMR" id="C5FSF3"/>
<dbReference type="STRING" id="554155.C5FSF3"/>
<dbReference type="GeneID" id="9225003"/>
<dbReference type="VEuPathDB" id="FungiDB:MCYG_05625"/>
<dbReference type="eggNOG" id="ENOG502S832">
    <property type="taxonomic scope" value="Eukaryota"/>
</dbReference>
<dbReference type="HOGENOM" id="CLU_016773_0_0_1"/>
<dbReference type="OMA" id="SICCLWK"/>
<dbReference type="OrthoDB" id="5349119at2759"/>
<dbReference type="Proteomes" id="UP000002035">
    <property type="component" value="Unassembled WGS sequence"/>
</dbReference>
<dbReference type="GO" id="GO:0033557">
    <property type="term" value="C:Slx1-Slx4 complex"/>
    <property type="evidence" value="ECO:0007669"/>
    <property type="project" value="UniProtKB-UniRule"/>
</dbReference>
<dbReference type="GO" id="GO:0017108">
    <property type="term" value="F:5'-flap endonuclease activity"/>
    <property type="evidence" value="ECO:0007669"/>
    <property type="project" value="InterPro"/>
</dbReference>
<dbReference type="GO" id="GO:0006310">
    <property type="term" value="P:DNA recombination"/>
    <property type="evidence" value="ECO:0007669"/>
    <property type="project" value="UniProtKB-UniRule"/>
</dbReference>
<dbReference type="GO" id="GO:0006281">
    <property type="term" value="P:DNA repair"/>
    <property type="evidence" value="ECO:0007669"/>
    <property type="project" value="UniProtKB-UniRule"/>
</dbReference>
<dbReference type="GO" id="GO:0006260">
    <property type="term" value="P:DNA replication"/>
    <property type="evidence" value="ECO:0007669"/>
    <property type="project" value="InterPro"/>
</dbReference>
<dbReference type="CDD" id="cd22999">
    <property type="entry name" value="SAP_SLX4"/>
    <property type="match status" value="1"/>
</dbReference>
<dbReference type="HAMAP" id="MF_03110">
    <property type="entry name" value="Endonuc_su_Slx4"/>
    <property type="match status" value="1"/>
</dbReference>
<dbReference type="InterPro" id="IPR027784">
    <property type="entry name" value="Slx4_ascomycetes"/>
</dbReference>
<dbReference type="InterPro" id="IPR018574">
    <property type="entry name" value="Structure-sp_endonuc_su_Slx4"/>
</dbReference>
<dbReference type="Pfam" id="PF09494">
    <property type="entry name" value="Slx4"/>
    <property type="match status" value="1"/>
</dbReference>